<comment type="function">
    <text evidence="1">Formation of pseudouridine at positions 38, 39 and 40 in the anticodon stem and loop of transfer RNAs.</text>
</comment>
<comment type="catalytic activity">
    <reaction evidence="1">
        <text>uridine(38/39/40) in tRNA = pseudouridine(38/39/40) in tRNA</text>
        <dbReference type="Rhea" id="RHEA:22376"/>
        <dbReference type="Rhea" id="RHEA-COMP:10085"/>
        <dbReference type="Rhea" id="RHEA-COMP:10087"/>
        <dbReference type="ChEBI" id="CHEBI:65314"/>
        <dbReference type="ChEBI" id="CHEBI:65315"/>
        <dbReference type="EC" id="5.4.99.12"/>
    </reaction>
</comment>
<comment type="subunit">
    <text evidence="1">Homodimer.</text>
</comment>
<comment type="similarity">
    <text evidence="1">Belongs to the tRNA pseudouridine synthase TruA family.</text>
</comment>
<evidence type="ECO:0000255" key="1">
    <source>
        <dbReference type="HAMAP-Rule" id="MF_00171"/>
    </source>
</evidence>
<accession>B1YH83</accession>
<protein>
    <recommendedName>
        <fullName evidence="1">tRNA pseudouridine synthase A</fullName>
        <ecNumber evidence="1">5.4.99.12</ecNumber>
    </recommendedName>
    <alternativeName>
        <fullName evidence="1">tRNA pseudouridine(38-40) synthase</fullName>
    </alternativeName>
    <alternativeName>
        <fullName evidence="1">tRNA pseudouridylate synthase I</fullName>
    </alternativeName>
    <alternativeName>
        <fullName evidence="1">tRNA-uridine isomerase I</fullName>
    </alternativeName>
</protein>
<proteinExistence type="inferred from homology"/>
<feature type="chain" id="PRO_1000097742" description="tRNA pseudouridine synthase A">
    <location>
        <begin position="1"/>
        <end position="249"/>
    </location>
</feature>
<feature type="active site" description="Nucleophile" evidence="1">
    <location>
        <position position="52"/>
    </location>
</feature>
<feature type="binding site" evidence="1">
    <location>
        <position position="110"/>
    </location>
    <ligand>
        <name>substrate</name>
    </ligand>
</feature>
<keyword id="KW-0413">Isomerase</keyword>
<keyword id="KW-1185">Reference proteome</keyword>
<keyword id="KW-0819">tRNA processing</keyword>
<sequence>MRRFKCTIQYDGTDYSGYQVQPNGLTIQEVLEKTLGRMHKHPVKVIGSGRTDARVHAQGQVIHFDTELSIAPASMVKALNTLLPDDIRVRDCKEVASDFEARYDVVGKEYRYFVRRTENAFRRHQSVLIPYSLDVAQIRLGLAHLVGTHDFSSFCVAKTETDNRVRTIYEAELIEQGEELIFRFQGSGFLYNQIRIMVGTLLDVGRGRFAPDDIKRMLEAKDRNVAGVTAPPHGLYLWEVFYPESKKGI</sequence>
<gene>
    <name evidence="1" type="primary">truA</name>
    <name type="ordered locus">Exig_0128</name>
</gene>
<name>TRUA_EXIS2</name>
<organism>
    <name type="scientific">Exiguobacterium sibiricum (strain DSM 17290 / CCUG 55495 / CIP 109462 / JCM 13490 / 255-15)</name>
    <dbReference type="NCBI Taxonomy" id="262543"/>
    <lineage>
        <taxon>Bacteria</taxon>
        <taxon>Bacillati</taxon>
        <taxon>Bacillota</taxon>
        <taxon>Bacilli</taxon>
        <taxon>Bacillales</taxon>
        <taxon>Bacillales Family XII. Incertae Sedis</taxon>
        <taxon>Exiguobacterium</taxon>
    </lineage>
</organism>
<dbReference type="EC" id="5.4.99.12" evidence="1"/>
<dbReference type="EMBL" id="CP001022">
    <property type="protein sequence ID" value="ACB59615.1"/>
    <property type="molecule type" value="Genomic_DNA"/>
</dbReference>
<dbReference type="RefSeq" id="WP_012369040.1">
    <property type="nucleotide sequence ID" value="NC_010556.1"/>
</dbReference>
<dbReference type="SMR" id="B1YH83"/>
<dbReference type="STRING" id="262543.Exig_0128"/>
<dbReference type="KEGG" id="esi:Exig_0128"/>
<dbReference type="eggNOG" id="COG0101">
    <property type="taxonomic scope" value="Bacteria"/>
</dbReference>
<dbReference type="HOGENOM" id="CLU_014673_0_1_9"/>
<dbReference type="OrthoDB" id="9811823at2"/>
<dbReference type="Proteomes" id="UP000001681">
    <property type="component" value="Chromosome"/>
</dbReference>
<dbReference type="GO" id="GO:0003723">
    <property type="term" value="F:RNA binding"/>
    <property type="evidence" value="ECO:0007669"/>
    <property type="project" value="InterPro"/>
</dbReference>
<dbReference type="GO" id="GO:0160147">
    <property type="term" value="F:tRNA pseudouridine(38-40) synthase activity"/>
    <property type="evidence" value="ECO:0007669"/>
    <property type="project" value="UniProtKB-EC"/>
</dbReference>
<dbReference type="GO" id="GO:0031119">
    <property type="term" value="P:tRNA pseudouridine synthesis"/>
    <property type="evidence" value="ECO:0007669"/>
    <property type="project" value="UniProtKB-UniRule"/>
</dbReference>
<dbReference type="CDD" id="cd02570">
    <property type="entry name" value="PseudoU_synth_EcTruA"/>
    <property type="match status" value="1"/>
</dbReference>
<dbReference type="FunFam" id="3.30.70.580:FF:000001">
    <property type="entry name" value="tRNA pseudouridine synthase A"/>
    <property type="match status" value="1"/>
</dbReference>
<dbReference type="Gene3D" id="3.30.70.660">
    <property type="entry name" value="Pseudouridine synthase I, catalytic domain, C-terminal subdomain"/>
    <property type="match status" value="1"/>
</dbReference>
<dbReference type="Gene3D" id="3.30.70.580">
    <property type="entry name" value="Pseudouridine synthase I, catalytic domain, N-terminal subdomain"/>
    <property type="match status" value="1"/>
</dbReference>
<dbReference type="HAMAP" id="MF_00171">
    <property type="entry name" value="TruA"/>
    <property type="match status" value="1"/>
</dbReference>
<dbReference type="InterPro" id="IPR020103">
    <property type="entry name" value="PsdUridine_synth_cat_dom_sf"/>
</dbReference>
<dbReference type="InterPro" id="IPR001406">
    <property type="entry name" value="PsdUridine_synth_TruA"/>
</dbReference>
<dbReference type="InterPro" id="IPR020097">
    <property type="entry name" value="PsdUridine_synth_TruA_a/b_dom"/>
</dbReference>
<dbReference type="InterPro" id="IPR020095">
    <property type="entry name" value="PsdUridine_synth_TruA_C"/>
</dbReference>
<dbReference type="InterPro" id="IPR020094">
    <property type="entry name" value="TruA/RsuA/RluB/E/F_N"/>
</dbReference>
<dbReference type="NCBIfam" id="TIGR00071">
    <property type="entry name" value="hisT_truA"/>
    <property type="match status" value="1"/>
</dbReference>
<dbReference type="PANTHER" id="PTHR11142">
    <property type="entry name" value="PSEUDOURIDYLATE SYNTHASE"/>
    <property type="match status" value="1"/>
</dbReference>
<dbReference type="PANTHER" id="PTHR11142:SF0">
    <property type="entry name" value="TRNA PSEUDOURIDINE SYNTHASE-LIKE 1"/>
    <property type="match status" value="1"/>
</dbReference>
<dbReference type="Pfam" id="PF01416">
    <property type="entry name" value="PseudoU_synth_1"/>
    <property type="match status" value="2"/>
</dbReference>
<dbReference type="PIRSF" id="PIRSF001430">
    <property type="entry name" value="tRNA_psdUrid_synth"/>
    <property type="match status" value="1"/>
</dbReference>
<dbReference type="SUPFAM" id="SSF55120">
    <property type="entry name" value="Pseudouridine synthase"/>
    <property type="match status" value="1"/>
</dbReference>
<reference key="1">
    <citation type="submission" date="2008-04" db="EMBL/GenBank/DDBJ databases">
        <title>Complete sequence of chromosome of Exiguobacterium sibiricum 255-15.</title>
        <authorList>
            <consortium name="US DOE Joint Genome Institute"/>
            <person name="Copeland A."/>
            <person name="Lucas S."/>
            <person name="Lapidus A."/>
            <person name="Glavina del Rio T."/>
            <person name="Dalin E."/>
            <person name="Tice H."/>
            <person name="Bruce D."/>
            <person name="Goodwin L."/>
            <person name="Pitluck S."/>
            <person name="Kiss H."/>
            <person name="Chertkov O."/>
            <person name="Monk C."/>
            <person name="Brettin T."/>
            <person name="Detter J.C."/>
            <person name="Han C."/>
            <person name="Kuske C.R."/>
            <person name="Schmutz J."/>
            <person name="Larimer F."/>
            <person name="Land M."/>
            <person name="Hauser L."/>
            <person name="Kyrpides N."/>
            <person name="Mikhailova N."/>
            <person name="Vishnivetskaya T."/>
            <person name="Rodrigues D.F."/>
            <person name="Gilichinsky D."/>
            <person name="Tiedje J."/>
            <person name="Richardson P."/>
        </authorList>
    </citation>
    <scope>NUCLEOTIDE SEQUENCE [LARGE SCALE GENOMIC DNA]</scope>
    <source>
        <strain>DSM 17290 / CCUG 55495 / CIP 109462 / JCM 13490 / 255-15</strain>
    </source>
</reference>